<organism>
    <name type="scientific">Pithecopus hypochondrialis</name>
    <name type="common">Orange-legged leaf frog</name>
    <name type="synonym">Phyllomedusa hypochondrialis</name>
    <dbReference type="NCBI Taxonomy" id="317381"/>
    <lineage>
        <taxon>Eukaryota</taxon>
        <taxon>Metazoa</taxon>
        <taxon>Chordata</taxon>
        <taxon>Craniata</taxon>
        <taxon>Vertebrata</taxon>
        <taxon>Euteleostomi</taxon>
        <taxon>Amphibia</taxon>
        <taxon>Batrachia</taxon>
        <taxon>Anura</taxon>
        <taxon>Neobatrachia</taxon>
        <taxon>Hyloidea</taxon>
        <taxon>Hylidae</taxon>
        <taxon>Phyllomedusinae</taxon>
        <taxon>Pithecopus</taxon>
    </lineage>
</organism>
<protein>
    <recommendedName>
        <fullName evidence="6">Phylloseptin-H7</fullName>
        <shortName evidence="6">PLS-H7</shortName>
    </recommendedName>
    <alternativeName>
        <fullName evidence="5">Phylloseptin-11</fullName>
        <shortName evidence="5">PS-11</shortName>
    </alternativeName>
    <alternativeName>
        <fullName evidence="6 8">Phylloseptin-9</fullName>
        <shortName evidence="6">PS-9</shortName>
    </alternativeName>
</protein>
<gene>
    <name evidence="8" type="primary">psn-9</name>
</gene>
<sequence>MAFLKKSLFLVLFLGLVSLSICEEEKRETEEEENDQEEDDKSEEKRFLSLLPSLVSGAVSLVKILG</sequence>
<dbReference type="EMBL" id="AM229012">
    <property type="protein sequence ID" value="CAJ76136.1"/>
    <property type="molecule type" value="mRNA"/>
</dbReference>
<dbReference type="GO" id="GO:0005576">
    <property type="term" value="C:extracellular region"/>
    <property type="evidence" value="ECO:0007669"/>
    <property type="project" value="UniProtKB-SubCell"/>
</dbReference>
<dbReference type="GO" id="GO:0006952">
    <property type="term" value="P:defense response"/>
    <property type="evidence" value="ECO:0007669"/>
    <property type="project" value="UniProtKB-KW"/>
</dbReference>
<dbReference type="InterPro" id="IPR004275">
    <property type="entry name" value="Frog_antimicrobial_propeptide"/>
</dbReference>
<dbReference type="InterPro" id="IPR016322">
    <property type="entry name" value="FSAP"/>
</dbReference>
<dbReference type="Pfam" id="PF03032">
    <property type="entry name" value="FSAP_sig_propep"/>
    <property type="match status" value="1"/>
</dbReference>
<dbReference type="PIRSF" id="PIRSF001822">
    <property type="entry name" value="Dermaseptin_precursor"/>
    <property type="match status" value="1"/>
</dbReference>
<keyword id="KW-0027">Amidation</keyword>
<keyword id="KW-0878">Amphibian defense peptide</keyword>
<keyword id="KW-0929">Antimicrobial</keyword>
<keyword id="KW-0165">Cleavage on pair of basic residues</keyword>
<keyword id="KW-0903">Direct protein sequencing</keyword>
<keyword id="KW-0964">Secreted</keyword>
<keyword id="KW-0732">Signal</keyword>
<proteinExistence type="evidence at protein level"/>
<reference key="1">
    <citation type="journal article" date="2006" name="Peptides">
        <title>Elements of the granular gland peptidome and transcriptome persist in air-dried skin of the South American orange-legged leaf frog, Phyllomedusa hypocondrialis.</title>
        <authorList>
            <person name="Chen T."/>
            <person name="Zhou M."/>
            <person name="Gagliardo R."/>
            <person name="Walker B."/>
            <person name="Shaw C."/>
        </authorList>
    </citation>
    <scope>NUCLEOTIDE SEQUENCE [MRNA]</scope>
    <scope>PROTEIN SEQUENCE OF 47-65</scope>
    <scope>SUBCELLULAR LOCATION</scope>
    <scope>TISSUE SPECIFICITY</scope>
    <scope>MASS SPECTROMETRY</scope>
    <scope>AMIDATION AT LEU-65</scope>
    <source>
        <tissue>Skin</tissue>
        <tissue>Skin secretion</tissue>
    </source>
</reference>
<reference key="2">
    <citation type="journal article" date="2008" name="Peptides">
        <title>A consistent nomenclature of antimicrobial peptides isolated from frogs of the subfamily Phyllomedusinae.</title>
        <authorList>
            <person name="Amiche M."/>
            <person name="Ladram A."/>
            <person name="Nicolas P."/>
        </authorList>
    </citation>
    <scope>NOMENCLATURE</scope>
</reference>
<feature type="signal peptide" evidence="2">
    <location>
        <begin position="1"/>
        <end position="22"/>
    </location>
</feature>
<feature type="propeptide" id="PRO_0000376043" evidence="4">
    <location>
        <begin position="23"/>
        <end position="44"/>
    </location>
</feature>
<feature type="peptide" id="PRO_5000078224" description="Phylloseptin-H7" evidence="4">
    <location>
        <begin position="47"/>
        <end position="65"/>
    </location>
</feature>
<feature type="region of interest" description="Disordered" evidence="3">
    <location>
        <begin position="25"/>
        <end position="44"/>
    </location>
</feature>
<feature type="compositionally biased region" description="Acidic residues" evidence="3">
    <location>
        <begin position="30"/>
        <end position="41"/>
    </location>
</feature>
<feature type="modified residue" description="Leucine amide" evidence="4">
    <location>
        <position position="65"/>
    </location>
</feature>
<accession>Q0VZ40</accession>
<evidence type="ECO:0000250" key="1">
    <source>
        <dbReference type="UniProtKB" id="Q17UY9"/>
    </source>
</evidence>
<evidence type="ECO:0000255" key="2"/>
<evidence type="ECO:0000256" key="3">
    <source>
        <dbReference type="SAM" id="MobiDB-lite"/>
    </source>
</evidence>
<evidence type="ECO:0000269" key="4">
    <source>
    </source>
</evidence>
<evidence type="ECO:0000303" key="5">
    <source>
    </source>
</evidence>
<evidence type="ECO:0000303" key="6">
    <source>
    </source>
</evidence>
<evidence type="ECO:0000305" key="7"/>
<evidence type="ECO:0000312" key="8">
    <source>
        <dbReference type="EMBL" id="CAJ76136.1"/>
    </source>
</evidence>
<comment type="function">
    <text evidence="1">Has antimicrobial activity.</text>
</comment>
<comment type="subcellular location">
    <subcellularLocation>
        <location evidence="4">Secreted</location>
    </subcellularLocation>
</comment>
<comment type="tissue specificity">
    <text evidence="4">Expressed by the skin glands.</text>
</comment>
<comment type="mass spectrometry"/>
<comment type="similarity">
    <text evidence="2">Belongs to the frog skin active peptide (FSAP) family. Phylloseptin subfamily.</text>
</comment>
<comment type="caution">
    <text evidence="7">There is a confusion with this peptide name. In the original refence Chen et al., 2006, authors attribute this sequence to Phylloseptin-11. This sequence is erroneously reproduced as 'Phylloseptin-9' in Amiche et al. 2008, in the nucleotide entry, and in the antimicrobial peptide database.</text>
</comment>
<comment type="online information" name="The antimicrobial peptide database">
    <link uri="https://wangapd3.com/database/query_output.php?ID=00974"/>
</comment>
<name>PLS7_PITHY</name>